<proteinExistence type="inferred from homology"/>
<dbReference type="EC" id="7.-.-.-" evidence="1"/>
<dbReference type="EMBL" id="AL590842">
    <property type="protein sequence ID" value="CAL20870.1"/>
    <property type="molecule type" value="Genomic_DNA"/>
</dbReference>
<dbReference type="EMBL" id="AE009952">
    <property type="protein sequence ID" value="AAM85646.1"/>
    <property type="molecule type" value="Genomic_DNA"/>
</dbReference>
<dbReference type="EMBL" id="AE017042">
    <property type="protein sequence ID" value="AAS62255.1"/>
    <property type="molecule type" value="Genomic_DNA"/>
</dbReference>
<dbReference type="PIR" id="AC0273">
    <property type="entry name" value="AC0273"/>
</dbReference>
<dbReference type="RefSeq" id="YP_002347212.1">
    <property type="nucleotide sequence ID" value="NC_003143.1"/>
</dbReference>
<dbReference type="SMR" id="Q8ZED3"/>
<dbReference type="STRING" id="214092.YPO2241"/>
<dbReference type="PaxDb" id="214092-YPO2241"/>
<dbReference type="DNASU" id="1147029"/>
<dbReference type="EnsemblBacteria" id="AAS62255">
    <property type="protein sequence ID" value="AAS62255"/>
    <property type="gene ID" value="YP_2039"/>
</dbReference>
<dbReference type="KEGG" id="ype:YPO2241"/>
<dbReference type="KEGG" id="ypk:y2082"/>
<dbReference type="KEGG" id="ypm:YP_2039"/>
<dbReference type="PATRIC" id="fig|214092.21.peg.2636"/>
<dbReference type="eggNOG" id="COG4659">
    <property type="taxonomic scope" value="Bacteria"/>
</dbReference>
<dbReference type="HOGENOM" id="CLU_077882_1_0_6"/>
<dbReference type="OMA" id="YSGAIHL"/>
<dbReference type="OrthoDB" id="9784165at2"/>
<dbReference type="Proteomes" id="UP000000815">
    <property type="component" value="Chromosome"/>
</dbReference>
<dbReference type="Proteomes" id="UP000001019">
    <property type="component" value="Chromosome"/>
</dbReference>
<dbReference type="Proteomes" id="UP000002490">
    <property type="component" value="Chromosome"/>
</dbReference>
<dbReference type="GO" id="GO:1990204">
    <property type="term" value="C:oxidoreductase complex"/>
    <property type="evidence" value="ECO:0000318"/>
    <property type="project" value="GO_Central"/>
</dbReference>
<dbReference type="GO" id="GO:0005886">
    <property type="term" value="C:plasma membrane"/>
    <property type="evidence" value="ECO:0000318"/>
    <property type="project" value="GO_Central"/>
</dbReference>
<dbReference type="GO" id="GO:0009055">
    <property type="term" value="F:electron transfer activity"/>
    <property type="evidence" value="ECO:0007669"/>
    <property type="project" value="InterPro"/>
</dbReference>
<dbReference type="GO" id="GO:0010181">
    <property type="term" value="F:FMN binding"/>
    <property type="evidence" value="ECO:0007669"/>
    <property type="project" value="InterPro"/>
</dbReference>
<dbReference type="GO" id="GO:0016651">
    <property type="term" value="F:oxidoreductase activity, acting on NAD(P)H"/>
    <property type="evidence" value="ECO:0000318"/>
    <property type="project" value="GO_Central"/>
</dbReference>
<dbReference type="GO" id="GO:0022900">
    <property type="term" value="P:electron transport chain"/>
    <property type="evidence" value="ECO:0007669"/>
    <property type="project" value="UniProtKB-UniRule"/>
</dbReference>
<dbReference type="HAMAP" id="MF_00479">
    <property type="entry name" value="RsxG_RnfG"/>
    <property type="match status" value="1"/>
</dbReference>
<dbReference type="InterPro" id="IPR007329">
    <property type="entry name" value="FMN-bd"/>
</dbReference>
<dbReference type="InterPro" id="IPR010209">
    <property type="entry name" value="Ion_transpt_RnfG/RsxG"/>
</dbReference>
<dbReference type="NCBIfam" id="NF002519">
    <property type="entry name" value="PRK01908.1"/>
    <property type="match status" value="1"/>
</dbReference>
<dbReference type="NCBIfam" id="TIGR01947">
    <property type="entry name" value="rnfG"/>
    <property type="match status" value="1"/>
</dbReference>
<dbReference type="PANTHER" id="PTHR36118">
    <property type="entry name" value="ION-TRANSLOCATING OXIDOREDUCTASE COMPLEX SUBUNIT G"/>
    <property type="match status" value="1"/>
</dbReference>
<dbReference type="PANTHER" id="PTHR36118:SF1">
    <property type="entry name" value="ION-TRANSLOCATING OXIDOREDUCTASE COMPLEX SUBUNIT G"/>
    <property type="match status" value="1"/>
</dbReference>
<dbReference type="Pfam" id="PF04205">
    <property type="entry name" value="FMN_bind"/>
    <property type="match status" value="1"/>
</dbReference>
<dbReference type="PIRSF" id="PIRSF006091">
    <property type="entry name" value="E_trnsport_RnfG"/>
    <property type="match status" value="1"/>
</dbReference>
<dbReference type="SMART" id="SM00900">
    <property type="entry name" value="FMN_bind"/>
    <property type="match status" value="1"/>
</dbReference>
<accession>Q8ZED3</accession>
<accession>Q0WES6</accession>
<reference key="1">
    <citation type="journal article" date="2001" name="Nature">
        <title>Genome sequence of Yersinia pestis, the causative agent of plague.</title>
        <authorList>
            <person name="Parkhill J."/>
            <person name="Wren B.W."/>
            <person name="Thomson N.R."/>
            <person name="Titball R.W."/>
            <person name="Holden M.T.G."/>
            <person name="Prentice M.B."/>
            <person name="Sebaihia M."/>
            <person name="James K.D."/>
            <person name="Churcher C.M."/>
            <person name="Mungall K.L."/>
            <person name="Baker S."/>
            <person name="Basham D."/>
            <person name="Bentley S.D."/>
            <person name="Brooks K."/>
            <person name="Cerdeno-Tarraga A.-M."/>
            <person name="Chillingworth T."/>
            <person name="Cronin A."/>
            <person name="Davies R.M."/>
            <person name="Davis P."/>
            <person name="Dougan G."/>
            <person name="Feltwell T."/>
            <person name="Hamlin N."/>
            <person name="Holroyd S."/>
            <person name="Jagels K."/>
            <person name="Karlyshev A.V."/>
            <person name="Leather S."/>
            <person name="Moule S."/>
            <person name="Oyston P.C.F."/>
            <person name="Quail M.A."/>
            <person name="Rutherford K.M."/>
            <person name="Simmonds M."/>
            <person name="Skelton J."/>
            <person name="Stevens K."/>
            <person name="Whitehead S."/>
            <person name="Barrell B.G."/>
        </authorList>
    </citation>
    <scope>NUCLEOTIDE SEQUENCE [LARGE SCALE GENOMIC DNA]</scope>
    <source>
        <strain>CO-92 / Biovar Orientalis</strain>
    </source>
</reference>
<reference key="2">
    <citation type="journal article" date="2002" name="J. Bacteriol.">
        <title>Genome sequence of Yersinia pestis KIM.</title>
        <authorList>
            <person name="Deng W."/>
            <person name="Burland V."/>
            <person name="Plunkett G. III"/>
            <person name="Boutin A."/>
            <person name="Mayhew G.F."/>
            <person name="Liss P."/>
            <person name="Perna N.T."/>
            <person name="Rose D.J."/>
            <person name="Mau B."/>
            <person name="Zhou S."/>
            <person name="Schwartz D.C."/>
            <person name="Fetherston J.D."/>
            <person name="Lindler L.E."/>
            <person name="Brubaker R.R."/>
            <person name="Plano G.V."/>
            <person name="Straley S.C."/>
            <person name="McDonough K.A."/>
            <person name="Nilles M.L."/>
            <person name="Matson J.S."/>
            <person name="Blattner F.R."/>
            <person name="Perry R.D."/>
        </authorList>
    </citation>
    <scope>NUCLEOTIDE SEQUENCE [LARGE SCALE GENOMIC DNA]</scope>
    <source>
        <strain>KIM10+ / Biovar Mediaevalis</strain>
    </source>
</reference>
<reference key="3">
    <citation type="journal article" date="2004" name="DNA Res.">
        <title>Complete genome sequence of Yersinia pestis strain 91001, an isolate avirulent to humans.</title>
        <authorList>
            <person name="Song Y."/>
            <person name="Tong Z."/>
            <person name="Wang J."/>
            <person name="Wang L."/>
            <person name="Guo Z."/>
            <person name="Han Y."/>
            <person name="Zhang J."/>
            <person name="Pei D."/>
            <person name="Zhou D."/>
            <person name="Qin H."/>
            <person name="Pang X."/>
            <person name="Han Y."/>
            <person name="Zhai J."/>
            <person name="Li M."/>
            <person name="Cui B."/>
            <person name="Qi Z."/>
            <person name="Jin L."/>
            <person name="Dai R."/>
            <person name="Chen F."/>
            <person name="Li S."/>
            <person name="Ye C."/>
            <person name="Du Z."/>
            <person name="Lin W."/>
            <person name="Wang J."/>
            <person name="Yu J."/>
            <person name="Yang H."/>
            <person name="Wang J."/>
            <person name="Huang P."/>
            <person name="Yang R."/>
        </authorList>
    </citation>
    <scope>NUCLEOTIDE SEQUENCE [LARGE SCALE GENOMIC DNA]</scope>
    <source>
        <strain>91001 / Biovar Mediaevalis</strain>
    </source>
</reference>
<name>RNFG_YERPE</name>
<evidence type="ECO:0000255" key="1">
    <source>
        <dbReference type="HAMAP-Rule" id="MF_00479"/>
    </source>
</evidence>
<feature type="chain" id="PRO_0000214645" description="Ion-translocating oxidoreductase complex subunit G">
    <location>
        <begin position="1"/>
        <end position="209"/>
    </location>
</feature>
<feature type="transmembrane region" description="Helical" evidence="1">
    <location>
        <begin position="9"/>
        <end position="29"/>
    </location>
</feature>
<feature type="modified residue" description="FMN phosphoryl threonine" evidence="1">
    <location>
        <position position="175"/>
    </location>
</feature>
<comment type="function">
    <text evidence="1">Part of a membrane-bound complex that couples electron transfer with translocation of ions across the membrane.</text>
</comment>
<comment type="cofactor">
    <cofactor evidence="1">
        <name>FMN</name>
        <dbReference type="ChEBI" id="CHEBI:58210"/>
    </cofactor>
</comment>
<comment type="subunit">
    <text evidence="1">The complex is composed of six subunits: RnfA, RnfB, RnfC, RnfD, RnfE and RnfG.</text>
</comment>
<comment type="subcellular location">
    <subcellularLocation>
        <location evidence="1">Cell inner membrane</location>
        <topology evidence="1">Single-pass membrane protein</topology>
    </subcellularLocation>
</comment>
<comment type="similarity">
    <text evidence="1">Belongs to the RnfG family.</text>
</comment>
<sequence>MLKTMRRHGITLALFAAGATGLTAVVNSLTENTIAHQAALQQKALLDQVVPAENYDNDMQAECYVVTDSALGNMAPHRLYLARKGNQPVAAAIETTAPDGYSGAIQLLVGADFHGNVLGSRVIEHHETPGLGDKIDIRISDWINHFSGQHVTGDDDKRWAVKKDGGSFDQFTGATITPRAVVRAVKNAALYLQTLPPQLSRLPSCGEDQ</sequence>
<keyword id="KW-0997">Cell inner membrane</keyword>
<keyword id="KW-1003">Cell membrane</keyword>
<keyword id="KW-0249">Electron transport</keyword>
<keyword id="KW-0285">Flavoprotein</keyword>
<keyword id="KW-0288">FMN</keyword>
<keyword id="KW-0472">Membrane</keyword>
<keyword id="KW-0597">Phosphoprotein</keyword>
<keyword id="KW-1185">Reference proteome</keyword>
<keyword id="KW-1278">Translocase</keyword>
<keyword id="KW-0812">Transmembrane</keyword>
<keyword id="KW-1133">Transmembrane helix</keyword>
<keyword id="KW-0813">Transport</keyword>
<organism>
    <name type="scientific">Yersinia pestis</name>
    <dbReference type="NCBI Taxonomy" id="632"/>
    <lineage>
        <taxon>Bacteria</taxon>
        <taxon>Pseudomonadati</taxon>
        <taxon>Pseudomonadota</taxon>
        <taxon>Gammaproteobacteria</taxon>
        <taxon>Enterobacterales</taxon>
        <taxon>Yersiniaceae</taxon>
        <taxon>Yersinia</taxon>
    </lineage>
</organism>
<protein>
    <recommendedName>
        <fullName evidence="1">Ion-translocating oxidoreductase complex subunit G</fullName>
        <ecNumber evidence="1">7.-.-.-</ecNumber>
    </recommendedName>
    <alternativeName>
        <fullName evidence="1">Rnf electron transport complex subunit G</fullName>
    </alternativeName>
</protein>
<gene>
    <name evidence="1" type="primary">rnfG</name>
    <name type="ordered locus">YPO2241</name>
    <name type="ordered locus">y2082</name>
    <name type="ordered locus">YP_2039</name>
</gene>